<proteinExistence type="inferred from homology"/>
<protein>
    <recommendedName>
        <fullName evidence="2">Histidine-binding periplasmic protein</fullName>
        <shortName>HBP</shortName>
    </recommendedName>
</protein>
<keyword id="KW-0029">Amino-acid transport</keyword>
<keyword id="KW-1015">Disulfide bond</keyword>
<keyword id="KW-0574">Periplasm</keyword>
<keyword id="KW-1185">Reference proteome</keyword>
<keyword id="KW-0732">Signal</keyword>
<keyword id="KW-0813">Transport</keyword>
<reference key="1">
    <citation type="journal article" date="2001" name="Nature">
        <title>Genome sequence of enterohaemorrhagic Escherichia coli O157:H7.</title>
        <authorList>
            <person name="Perna N.T."/>
            <person name="Plunkett G. III"/>
            <person name="Burland V."/>
            <person name="Mau B."/>
            <person name="Glasner J.D."/>
            <person name="Rose D.J."/>
            <person name="Mayhew G.F."/>
            <person name="Evans P.S."/>
            <person name="Gregor J."/>
            <person name="Kirkpatrick H.A."/>
            <person name="Posfai G."/>
            <person name="Hackett J."/>
            <person name="Klink S."/>
            <person name="Boutin A."/>
            <person name="Shao Y."/>
            <person name="Miller L."/>
            <person name="Grotbeck E.J."/>
            <person name="Davis N.W."/>
            <person name="Lim A."/>
            <person name="Dimalanta E.T."/>
            <person name="Potamousis K."/>
            <person name="Apodaca J."/>
            <person name="Anantharaman T.S."/>
            <person name="Lin J."/>
            <person name="Yen G."/>
            <person name="Schwartz D.C."/>
            <person name="Welch R.A."/>
            <person name="Blattner F.R."/>
        </authorList>
    </citation>
    <scope>NUCLEOTIDE SEQUENCE [LARGE SCALE GENOMIC DNA]</scope>
    <source>
        <strain>O157:H7 / EDL933 / ATCC 700927 / EHEC</strain>
    </source>
</reference>
<reference key="2">
    <citation type="journal article" date="2001" name="DNA Res.">
        <title>Complete genome sequence of enterohemorrhagic Escherichia coli O157:H7 and genomic comparison with a laboratory strain K-12.</title>
        <authorList>
            <person name="Hayashi T."/>
            <person name="Makino K."/>
            <person name="Ohnishi M."/>
            <person name="Kurokawa K."/>
            <person name="Ishii K."/>
            <person name="Yokoyama K."/>
            <person name="Han C.-G."/>
            <person name="Ohtsubo E."/>
            <person name="Nakayama K."/>
            <person name="Murata T."/>
            <person name="Tanaka M."/>
            <person name="Tobe T."/>
            <person name="Iida T."/>
            <person name="Takami H."/>
            <person name="Honda T."/>
            <person name="Sasakawa C."/>
            <person name="Ogasawara N."/>
            <person name="Yasunaga T."/>
            <person name="Kuhara S."/>
            <person name="Shiba T."/>
            <person name="Hattori M."/>
            <person name="Shinagawa H."/>
        </authorList>
    </citation>
    <scope>NUCLEOTIDE SEQUENCE [LARGE SCALE GENOMIC DNA]</scope>
    <source>
        <strain>O157:H7 / Sakai / RIMD 0509952 / EHEC</strain>
    </source>
</reference>
<organism>
    <name type="scientific">Escherichia coli O157:H7</name>
    <dbReference type="NCBI Taxonomy" id="83334"/>
    <lineage>
        <taxon>Bacteria</taxon>
        <taxon>Pseudomonadati</taxon>
        <taxon>Pseudomonadota</taxon>
        <taxon>Gammaproteobacteria</taxon>
        <taxon>Enterobacterales</taxon>
        <taxon>Enterobacteriaceae</taxon>
        <taxon>Escherichia</taxon>
    </lineage>
</organism>
<evidence type="ECO:0000250" key="1">
    <source>
        <dbReference type="UniProtKB" id="P02910"/>
    </source>
</evidence>
<evidence type="ECO:0000250" key="2">
    <source>
        <dbReference type="UniProtKB" id="P0AEU0"/>
    </source>
</evidence>
<evidence type="ECO:0000305" key="3"/>
<gene>
    <name type="primary">hisJ</name>
    <name type="ordered locus">Z3571</name>
    <name type="ordered locus">ECs3193</name>
</gene>
<feature type="signal peptide" evidence="2">
    <location>
        <begin position="1"/>
        <end position="22"/>
    </location>
</feature>
<feature type="chain" id="PRO_0000045056" description="Histidine-binding periplasmic protein">
    <location>
        <begin position="23"/>
        <end position="260"/>
    </location>
</feature>
<feature type="binding site" evidence="2">
    <location>
        <position position="91"/>
    </location>
    <ligand>
        <name>L-histidine</name>
        <dbReference type="ChEBI" id="CHEBI:57595"/>
    </ligand>
</feature>
<feature type="binding site" evidence="2">
    <location>
        <position position="92"/>
    </location>
    <ligand>
        <name>L-histidine</name>
        <dbReference type="ChEBI" id="CHEBI:57595"/>
    </ligand>
</feature>
<feature type="binding site" evidence="2">
    <location>
        <position position="94"/>
    </location>
    <ligand>
        <name>L-histidine</name>
        <dbReference type="ChEBI" id="CHEBI:57595"/>
    </ligand>
</feature>
<feature type="binding site" evidence="2">
    <location>
        <position position="99"/>
    </location>
    <ligand>
        <name>L-histidine</name>
        <dbReference type="ChEBI" id="CHEBI:57595"/>
    </ligand>
</feature>
<feature type="binding site" evidence="2">
    <location>
        <position position="143"/>
    </location>
    <ligand>
        <name>L-histidine</name>
        <dbReference type="ChEBI" id="CHEBI:57595"/>
    </ligand>
</feature>
<feature type="binding site" evidence="2">
    <location>
        <position position="183"/>
    </location>
    <ligand>
        <name>L-histidine</name>
        <dbReference type="ChEBI" id="CHEBI:57595"/>
    </ligand>
</feature>
<feature type="disulfide bond" evidence="2">
    <location>
        <begin position="60"/>
        <end position="67"/>
    </location>
</feature>
<dbReference type="EMBL" id="AE005174">
    <property type="protein sequence ID" value="AAG57438.1"/>
    <property type="molecule type" value="Genomic_DNA"/>
</dbReference>
<dbReference type="EMBL" id="BA000007">
    <property type="protein sequence ID" value="BAB36616.1"/>
    <property type="molecule type" value="Genomic_DNA"/>
</dbReference>
<dbReference type="PIR" id="A91028">
    <property type="entry name" value="A91028"/>
</dbReference>
<dbReference type="PIR" id="B85872">
    <property type="entry name" value="B85872"/>
</dbReference>
<dbReference type="RefSeq" id="NP_311220.1">
    <property type="nucleotide sequence ID" value="NC_002695.1"/>
</dbReference>
<dbReference type="RefSeq" id="WP_000737621.1">
    <property type="nucleotide sequence ID" value="NZ_VOAI01000001.1"/>
</dbReference>
<dbReference type="BMRB" id="P0AEU2"/>
<dbReference type="SMR" id="P0AEU2"/>
<dbReference type="STRING" id="155864.Z3571"/>
<dbReference type="GeneID" id="916901"/>
<dbReference type="GeneID" id="93774865"/>
<dbReference type="KEGG" id="ece:Z3571"/>
<dbReference type="KEGG" id="ecs:ECs_3193"/>
<dbReference type="PATRIC" id="fig|386585.9.peg.3333"/>
<dbReference type="eggNOG" id="COG0834">
    <property type="taxonomic scope" value="Bacteria"/>
</dbReference>
<dbReference type="HOGENOM" id="CLU_019602_18_0_6"/>
<dbReference type="OMA" id="FSEEPYG"/>
<dbReference type="Proteomes" id="UP000000558">
    <property type="component" value="Chromosome"/>
</dbReference>
<dbReference type="Proteomes" id="UP000002519">
    <property type="component" value="Chromosome"/>
</dbReference>
<dbReference type="GO" id="GO:0030288">
    <property type="term" value="C:outer membrane-bounded periplasmic space"/>
    <property type="evidence" value="ECO:0007669"/>
    <property type="project" value="InterPro"/>
</dbReference>
<dbReference type="GO" id="GO:0006865">
    <property type="term" value="P:amino acid transport"/>
    <property type="evidence" value="ECO:0007669"/>
    <property type="project" value="UniProtKB-KW"/>
</dbReference>
<dbReference type="CDD" id="cd13703">
    <property type="entry name" value="PBP2_HisJ_LAO"/>
    <property type="match status" value="1"/>
</dbReference>
<dbReference type="FunFam" id="3.40.190.10:FF:000020">
    <property type="entry name" value="Histidine ABC transporter substrate-binding periplasmic protein"/>
    <property type="match status" value="1"/>
</dbReference>
<dbReference type="Gene3D" id="3.40.190.10">
    <property type="entry name" value="Periplasmic binding protein-like II"/>
    <property type="match status" value="2"/>
</dbReference>
<dbReference type="InterPro" id="IPR005768">
    <property type="entry name" value="Lys_Arg_Orn-bd"/>
</dbReference>
<dbReference type="InterPro" id="IPR018313">
    <property type="entry name" value="SBP_3_CS"/>
</dbReference>
<dbReference type="InterPro" id="IPR001638">
    <property type="entry name" value="Solute-binding_3/MltF_N"/>
</dbReference>
<dbReference type="NCBIfam" id="TIGR01096">
    <property type="entry name" value="3A0103s03R"/>
    <property type="match status" value="1"/>
</dbReference>
<dbReference type="NCBIfam" id="NF011965">
    <property type="entry name" value="PRK15437.1"/>
    <property type="match status" value="1"/>
</dbReference>
<dbReference type="PANTHER" id="PTHR35936:SF13">
    <property type="entry name" value="HISTIDINE-BINDING PERIPLASMIC PROTEIN"/>
    <property type="match status" value="1"/>
</dbReference>
<dbReference type="PANTHER" id="PTHR35936">
    <property type="entry name" value="MEMBRANE-BOUND LYTIC MUREIN TRANSGLYCOSYLASE F"/>
    <property type="match status" value="1"/>
</dbReference>
<dbReference type="Pfam" id="PF00497">
    <property type="entry name" value="SBP_bac_3"/>
    <property type="match status" value="1"/>
</dbReference>
<dbReference type="SMART" id="SM00062">
    <property type="entry name" value="PBPb"/>
    <property type="match status" value="1"/>
</dbReference>
<dbReference type="SUPFAM" id="SSF53850">
    <property type="entry name" value="Periplasmic binding protein-like II"/>
    <property type="match status" value="1"/>
</dbReference>
<dbReference type="PROSITE" id="PS01039">
    <property type="entry name" value="SBP_BACTERIAL_3"/>
    <property type="match status" value="1"/>
</dbReference>
<comment type="function">
    <text evidence="1">Part of the ABC transporter complex HisPMQJ involved in histidine transport (By similarity). Binds histidine (By similarity). Interacts with HisQMP and stimulates ATPase activity of HisP, which results in histidine translocation (By similarity).</text>
</comment>
<comment type="subunit">
    <text evidence="1">The complex is composed of two ATP-binding proteins (HisP), two transmembrane proteins (HisM and HisQ) and a solute-binding protein (HisJ).</text>
</comment>
<comment type="subcellular location">
    <subcellularLocation>
        <location evidence="1">Periplasm</location>
    </subcellularLocation>
</comment>
<comment type="similarity">
    <text evidence="3">Belongs to the bacterial solute-binding protein 3 family.</text>
</comment>
<accession>P0AEU2</accession>
<accession>P39182</accession>
<accession>P77763</accession>
<sequence length="260" mass="28483">MKKLVLSLSLVLAFSSATAAFAAIPQNIRIGTDPTYAPFESKNSQGELVGFDIDLAKELCKRINTQCTFVENPLDALIPSLKAKKIDAIMSSLSITEKRQQEIAFTDKLYAADSRLVVAKNSDIQPTVESLKGKRVGVLQGTTQETFGNEHWAPKGIEIVSYQGQDNIYSDLTAGRIDAAFQDEVAASEGFLKQPVGKDYKFGGPSVKDEKLFGVGTGMGLRKEDNELREALNKAFAEMRADGTYEKLAKKYFDFDVYGG</sequence>
<name>HISJ_ECO57</name>